<name>MRAZ_BACFN</name>
<feature type="chain" id="PRO_0000230078" description="Transcriptional regulator MraZ">
    <location>
        <begin position="1"/>
        <end position="158"/>
    </location>
</feature>
<feature type="domain" description="SpoVT-AbrB 1" evidence="2">
    <location>
        <begin position="7"/>
        <end position="54"/>
    </location>
</feature>
<feature type="domain" description="SpoVT-AbrB 2" evidence="2">
    <location>
        <begin position="84"/>
        <end position="127"/>
    </location>
</feature>
<gene>
    <name evidence="1" type="primary">mraZ</name>
    <name type="ordered locus">BF0262</name>
</gene>
<proteinExistence type="inferred from homology"/>
<accession>Q5LII9</accession>
<comment type="subunit">
    <text evidence="1">Forms oligomers.</text>
</comment>
<comment type="subcellular location">
    <subcellularLocation>
        <location evidence="1">Cytoplasm</location>
        <location evidence="1">Nucleoid</location>
    </subcellularLocation>
</comment>
<comment type="similarity">
    <text evidence="1">Belongs to the MraZ family.</text>
</comment>
<evidence type="ECO:0000255" key="1">
    <source>
        <dbReference type="HAMAP-Rule" id="MF_01008"/>
    </source>
</evidence>
<evidence type="ECO:0000255" key="2">
    <source>
        <dbReference type="PROSITE-ProRule" id="PRU01076"/>
    </source>
</evidence>
<protein>
    <recommendedName>
        <fullName>Transcriptional regulator MraZ</fullName>
    </recommendedName>
</protein>
<sequence>MIRFLGNIEAKADAKGRVFIPAQFRRQLQSGSEDKLIMRKDVFQDCLVLYPEEVWNEELDELRQRLNKWNANHQLIFRQFVSDVEIITMDGNGRILIPKRYLQITGIQSDVRFIGVDNKIEIWAKERAEKLFMEPKAFGAALEEIMKEERRTTNNELK</sequence>
<keyword id="KW-0963">Cytoplasm</keyword>
<keyword id="KW-0238">DNA-binding</keyword>
<keyword id="KW-0677">Repeat</keyword>
<keyword id="KW-0804">Transcription</keyword>
<keyword id="KW-0805">Transcription regulation</keyword>
<organism>
    <name type="scientific">Bacteroides fragilis (strain ATCC 25285 / DSM 2151 / CCUG 4856 / JCM 11019 / LMG 10263 / NCTC 9343 / Onslow / VPI 2553 / EN-2)</name>
    <dbReference type="NCBI Taxonomy" id="272559"/>
    <lineage>
        <taxon>Bacteria</taxon>
        <taxon>Pseudomonadati</taxon>
        <taxon>Bacteroidota</taxon>
        <taxon>Bacteroidia</taxon>
        <taxon>Bacteroidales</taxon>
        <taxon>Bacteroidaceae</taxon>
        <taxon>Bacteroides</taxon>
    </lineage>
</organism>
<reference key="1">
    <citation type="journal article" date="2005" name="Science">
        <title>Extensive DNA inversions in the B. fragilis genome control variable gene expression.</title>
        <authorList>
            <person name="Cerdeno-Tarraga A.-M."/>
            <person name="Patrick S."/>
            <person name="Crossman L.C."/>
            <person name="Blakely G."/>
            <person name="Abratt V."/>
            <person name="Lennard N."/>
            <person name="Poxton I."/>
            <person name="Duerden B."/>
            <person name="Harris B."/>
            <person name="Quail M.A."/>
            <person name="Barron A."/>
            <person name="Clark L."/>
            <person name="Corton C."/>
            <person name="Doggett J."/>
            <person name="Holden M.T.G."/>
            <person name="Larke N."/>
            <person name="Line A."/>
            <person name="Lord A."/>
            <person name="Norbertczak H."/>
            <person name="Ormond D."/>
            <person name="Price C."/>
            <person name="Rabbinowitsch E."/>
            <person name="Woodward J."/>
            <person name="Barrell B.G."/>
            <person name="Parkhill J."/>
        </authorList>
    </citation>
    <scope>NUCLEOTIDE SEQUENCE [LARGE SCALE GENOMIC DNA]</scope>
    <source>
        <strain>ATCC 25285 / DSM 2151 / CCUG 4856 / JCM 11019 / LMG 10263 / NCTC 9343 / Onslow / VPI 2553 / EN-2</strain>
    </source>
</reference>
<dbReference type="EMBL" id="CR626927">
    <property type="protein sequence ID" value="CAH06037.1"/>
    <property type="molecule type" value="Genomic_DNA"/>
</dbReference>
<dbReference type="RefSeq" id="WP_005801871.1">
    <property type="nucleotide sequence ID" value="NZ_UFTH01000001.1"/>
</dbReference>
<dbReference type="SMR" id="Q5LII9"/>
<dbReference type="PaxDb" id="272559-BF9343_0258"/>
<dbReference type="GeneID" id="60369571"/>
<dbReference type="KEGG" id="bfs:BF9343_0258"/>
<dbReference type="eggNOG" id="COG2001">
    <property type="taxonomic scope" value="Bacteria"/>
</dbReference>
<dbReference type="HOGENOM" id="CLU_107907_0_1_10"/>
<dbReference type="Proteomes" id="UP000006731">
    <property type="component" value="Chromosome"/>
</dbReference>
<dbReference type="GO" id="GO:0005737">
    <property type="term" value="C:cytoplasm"/>
    <property type="evidence" value="ECO:0007669"/>
    <property type="project" value="UniProtKB-UniRule"/>
</dbReference>
<dbReference type="GO" id="GO:0009295">
    <property type="term" value="C:nucleoid"/>
    <property type="evidence" value="ECO:0007669"/>
    <property type="project" value="UniProtKB-SubCell"/>
</dbReference>
<dbReference type="GO" id="GO:0003700">
    <property type="term" value="F:DNA-binding transcription factor activity"/>
    <property type="evidence" value="ECO:0007669"/>
    <property type="project" value="UniProtKB-UniRule"/>
</dbReference>
<dbReference type="GO" id="GO:0000976">
    <property type="term" value="F:transcription cis-regulatory region binding"/>
    <property type="evidence" value="ECO:0007669"/>
    <property type="project" value="TreeGrafter"/>
</dbReference>
<dbReference type="GO" id="GO:2000143">
    <property type="term" value="P:negative regulation of DNA-templated transcription initiation"/>
    <property type="evidence" value="ECO:0007669"/>
    <property type="project" value="TreeGrafter"/>
</dbReference>
<dbReference type="CDD" id="cd16321">
    <property type="entry name" value="MraZ_C"/>
    <property type="match status" value="1"/>
</dbReference>
<dbReference type="CDD" id="cd16320">
    <property type="entry name" value="MraZ_N"/>
    <property type="match status" value="1"/>
</dbReference>
<dbReference type="Gene3D" id="3.40.1550.20">
    <property type="entry name" value="Transcriptional regulator MraZ domain"/>
    <property type="match status" value="1"/>
</dbReference>
<dbReference type="HAMAP" id="MF_01008">
    <property type="entry name" value="MraZ"/>
    <property type="match status" value="1"/>
</dbReference>
<dbReference type="InterPro" id="IPR003444">
    <property type="entry name" value="MraZ"/>
</dbReference>
<dbReference type="InterPro" id="IPR035644">
    <property type="entry name" value="MraZ_C"/>
</dbReference>
<dbReference type="InterPro" id="IPR020603">
    <property type="entry name" value="MraZ_dom"/>
</dbReference>
<dbReference type="InterPro" id="IPR035642">
    <property type="entry name" value="MraZ_N"/>
</dbReference>
<dbReference type="InterPro" id="IPR038619">
    <property type="entry name" value="MraZ_sf"/>
</dbReference>
<dbReference type="InterPro" id="IPR007159">
    <property type="entry name" value="SpoVT-AbrB_dom"/>
</dbReference>
<dbReference type="InterPro" id="IPR037914">
    <property type="entry name" value="SpoVT-AbrB_sf"/>
</dbReference>
<dbReference type="NCBIfam" id="NF001483">
    <property type="entry name" value="PRK00326.3-5"/>
    <property type="match status" value="1"/>
</dbReference>
<dbReference type="PANTHER" id="PTHR34701">
    <property type="entry name" value="TRANSCRIPTIONAL REGULATOR MRAZ"/>
    <property type="match status" value="1"/>
</dbReference>
<dbReference type="PANTHER" id="PTHR34701:SF1">
    <property type="entry name" value="TRANSCRIPTIONAL REGULATOR MRAZ"/>
    <property type="match status" value="1"/>
</dbReference>
<dbReference type="Pfam" id="PF02381">
    <property type="entry name" value="MraZ"/>
    <property type="match status" value="2"/>
</dbReference>
<dbReference type="SUPFAM" id="SSF89447">
    <property type="entry name" value="AbrB/MazE/MraZ-like"/>
    <property type="match status" value="1"/>
</dbReference>
<dbReference type="PROSITE" id="PS51740">
    <property type="entry name" value="SPOVT_ABRB"/>
    <property type="match status" value="2"/>
</dbReference>